<feature type="chain" id="PRO_1000025338" description="Co-chaperonin GroES">
    <location>
        <begin position="1"/>
        <end position="97"/>
    </location>
</feature>
<gene>
    <name evidence="1" type="primary">groES</name>
    <name evidence="1" type="synonym">groS</name>
    <name type="ordered locus">Pput_4364</name>
</gene>
<proteinExistence type="inferred from homology"/>
<keyword id="KW-0143">Chaperone</keyword>
<keyword id="KW-0963">Cytoplasm</keyword>
<protein>
    <recommendedName>
        <fullName evidence="1">Co-chaperonin GroES</fullName>
    </recommendedName>
    <alternativeName>
        <fullName evidence="1">10 kDa chaperonin</fullName>
    </alternativeName>
    <alternativeName>
        <fullName evidence="1">Chaperonin-10</fullName>
        <shortName evidence="1">Cpn10</shortName>
    </alternativeName>
</protein>
<comment type="function">
    <text evidence="1">Together with the chaperonin GroEL, plays an essential role in assisting protein folding. The GroEL-GroES system forms a nano-cage that allows encapsulation of the non-native substrate proteins and provides a physical environment optimized to promote and accelerate protein folding. GroES binds to the apical surface of the GroEL ring, thereby capping the opening of the GroEL channel.</text>
</comment>
<comment type="subunit">
    <text evidence="1">Heptamer of 7 subunits arranged in a ring. Interacts with the chaperonin GroEL.</text>
</comment>
<comment type="subcellular location">
    <subcellularLocation>
        <location evidence="1">Cytoplasm</location>
    </subcellularLocation>
</comment>
<comment type="similarity">
    <text evidence="1">Belongs to the GroES chaperonin family.</text>
</comment>
<evidence type="ECO:0000255" key="1">
    <source>
        <dbReference type="HAMAP-Rule" id="MF_00580"/>
    </source>
</evidence>
<organism>
    <name type="scientific">Pseudomonas putida (strain ATCC 700007 / DSM 6899 / JCM 31910 / BCRC 17059 / LMG 24140 / F1)</name>
    <dbReference type="NCBI Taxonomy" id="351746"/>
    <lineage>
        <taxon>Bacteria</taxon>
        <taxon>Pseudomonadati</taxon>
        <taxon>Pseudomonadota</taxon>
        <taxon>Gammaproteobacteria</taxon>
        <taxon>Pseudomonadales</taxon>
        <taxon>Pseudomonadaceae</taxon>
        <taxon>Pseudomonas</taxon>
    </lineage>
</organism>
<accession>A5W8M7</accession>
<reference key="1">
    <citation type="submission" date="2007-05" db="EMBL/GenBank/DDBJ databases">
        <title>Complete sequence of Pseudomonas putida F1.</title>
        <authorList>
            <consortium name="US DOE Joint Genome Institute"/>
            <person name="Copeland A."/>
            <person name="Lucas S."/>
            <person name="Lapidus A."/>
            <person name="Barry K."/>
            <person name="Detter J.C."/>
            <person name="Glavina del Rio T."/>
            <person name="Hammon N."/>
            <person name="Israni S."/>
            <person name="Dalin E."/>
            <person name="Tice H."/>
            <person name="Pitluck S."/>
            <person name="Chain P."/>
            <person name="Malfatti S."/>
            <person name="Shin M."/>
            <person name="Vergez L."/>
            <person name="Schmutz J."/>
            <person name="Larimer F."/>
            <person name="Land M."/>
            <person name="Hauser L."/>
            <person name="Kyrpides N."/>
            <person name="Lykidis A."/>
            <person name="Parales R."/>
            <person name="Richardson P."/>
        </authorList>
    </citation>
    <scope>NUCLEOTIDE SEQUENCE [LARGE SCALE GENOMIC DNA]</scope>
    <source>
        <strain>ATCC 700007 / DSM 6899 / JCM 31910 / BCRC 17059 / LMG 24140 / F1</strain>
    </source>
</reference>
<dbReference type="EMBL" id="CP000712">
    <property type="protein sequence ID" value="ABQ80487.1"/>
    <property type="molecule type" value="Genomic_DNA"/>
</dbReference>
<dbReference type="SMR" id="A5W8M7"/>
<dbReference type="KEGG" id="ppf:Pput_4364"/>
<dbReference type="eggNOG" id="COG0234">
    <property type="taxonomic scope" value="Bacteria"/>
</dbReference>
<dbReference type="HOGENOM" id="CLU_132825_2_0_6"/>
<dbReference type="GO" id="GO:0005737">
    <property type="term" value="C:cytoplasm"/>
    <property type="evidence" value="ECO:0007669"/>
    <property type="project" value="UniProtKB-SubCell"/>
</dbReference>
<dbReference type="GO" id="GO:0005524">
    <property type="term" value="F:ATP binding"/>
    <property type="evidence" value="ECO:0007669"/>
    <property type="project" value="InterPro"/>
</dbReference>
<dbReference type="GO" id="GO:0046872">
    <property type="term" value="F:metal ion binding"/>
    <property type="evidence" value="ECO:0007669"/>
    <property type="project" value="TreeGrafter"/>
</dbReference>
<dbReference type="GO" id="GO:0044183">
    <property type="term" value="F:protein folding chaperone"/>
    <property type="evidence" value="ECO:0007669"/>
    <property type="project" value="InterPro"/>
</dbReference>
<dbReference type="GO" id="GO:0051087">
    <property type="term" value="F:protein-folding chaperone binding"/>
    <property type="evidence" value="ECO:0007669"/>
    <property type="project" value="TreeGrafter"/>
</dbReference>
<dbReference type="GO" id="GO:0051082">
    <property type="term" value="F:unfolded protein binding"/>
    <property type="evidence" value="ECO:0007669"/>
    <property type="project" value="TreeGrafter"/>
</dbReference>
<dbReference type="GO" id="GO:0051085">
    <property type="term" value="P:chaperone cofactor-dependent protein refolding"/>
    <property type="evidence" value="ECO:0007669"/>
    <property type="project" value="TreeGrafter"/>
</dbReference>
<dbReference type="CDD" id="cd00320">
    <property type="entry name" value="cpn10"/>
    <property type="match status" value="1"/>
</dbReference>
<dbReference type="FunFam" id="2.30.33.40:FF:000001">
    <property type="entry name" value="10 kDa chaperonin"/>
    <property type="match status" value="1"/>
</dbReference>
<dbReference type="Gene3D" id="2.30.33.40">
    <property type="entry name" value="GroES chaperonin"/>
    <property type="match status" value="1"/>
</dbReference>
<dbReference type="HAMAP" id="MF_00580">
    <property type="entry name" value="CH10"/>
    <property type="match status" value="1"/>
</dbReference>
<dbReference type="InterPro" id="IPR020818">
    <property type="entry name" value="Chaperonin_GroES"/>
</dbReference>
<dbReference type="InterPro" id="IPR037124">
    <property type="entry name" value="Chaperonin_GroES_sf"/>
</dbReference>
<dbReference type="InterPro" id="IPR018369">
    <property type="entry name" value="Chaprnonin_Cpn10_CS"/>
</dbReference>
<dbReference type="InterPro" id="IPR011032">
    <property type="entry name" value="GroES-like_sf"/>
</dbReference>
<dbReference type="NCBIfam" id="NF001526">
    <property type="entry name" value="PRK00364.1-1"/>
    <property type="match status" value="1"/>
</dbReference>
<dbReference type="NCBIfam" id="NF001527">
    <property type="entry name" value="PRK00364.1-2"/>
    <property type="match status" value="1"/>
</dbReference>
<dbReference type="NCBIfam" id="NF001531">
    <property type="entry name" value="PRK00364.2-2"/>
    <property type="match status" value="1"/>
</dbReference>
<dbReference type="NCBIfam" id="NF001533">
    <property type="entry name" value="PRK00364.2-4"/>
    <property type="match status" value="1"/>
</dbReference>
<dbReference type="PANTHER" id="PTHR10772">
    <property type="entry name" value="10 KDA HEAT SHOCK PROTEIN"/>
    <property type="match status" value="1"/>
</dbReference>
<dbReference type="PANTHER" id="PTHR10772:SF58">
    <property type="entry name" value="CO-CHAPERONIN GROES"/>
    <property type="match status" value="1"/>
</dbReference>
<dbReference type="Pfam" id="PF00166">
    <property type="entry name" value="Cpn10"/>
    <property type="match status" value="1"/>
</dbReference>
<dbReference type="PRINTS" id="PR00297">
    <property type="entry name" value="CHAPERONIN10"/>
</dbReference>
<dbReference type="SMART" id="SM00883">
    <property type="entry name" value="Cpn10"/>
    <property type="match status" value="1"/>
</dbReference>
<dbReference type="SUPFAM" id="SSF50129">
    <property type="entry name" value="GroES-like"/>
    <property type="match status" value="1"/>
</dbReference>
<dbReference type="PROSITE" id="PS00681">
    <property type="entry name" value="CHAPERONINS_CPN10"/>
    <property type="match status" value="1"/>
</dbReference>
<name>CH10_PSEP1</name>
<sequence length="97" mass="10224">MKLRPLHDRVVIRRSEEESKTAGGIVLPGSAAEKPNRGEVVAVGTGRVLDNGEVRALAVKVGDKVVFGPYSGSNTVKVDGEDLLVMAENEILAVVEG</sequence>